<protein>
    <recommendedName>
        <fullName evidence="1">Large ribosomal subunit protein bL36A</fullName>
    </recommendedName>
    <alternativeName>
        <fullName evidence="2">50S ribosomal protein L36 1</fullName>
    </alternativeName>
</protein>
<organism>
    <name type="scientific">Yersinia pseudotuberculosis serotype O:3 (strain YPIII)</name>
    <dbReference type="NCBI Taxonomy" id="502800"/>
    <lineage>
        <taxon>Bacteria</taxon>
        <taxon>Pseudomonadati</taxon>
        <taxon>Pseudomonadota</taxon>
        <taxon>Gammaproteobacteria</taxon>
        <taxon>Enterobacterales</taxon>
        <taxon>Yersiniaceae</taxon>
        <taxon>Yersinia</taxon>
    </lineage>
</organism>
<gene>
    <name evidence="1" type="primary">rpmJ1</name>
    <name type="ordered locus">YPK_0304</name>
</gene>
<feature type="chain" id="PRO_0000344736" description="Large ribosomal subunit protein bL36A">
    <location>
        <begin position="1"/>
        <end position="38"/>
    </location>
</feature>
<accession>B1JIY2</accession>
<name>RL361_YERPY</name>
<evidence type="ECO:0000255" key="1">
    <source>
        <dbReference type="HAMAP-Rule" id="MF_00251"/>
    </source>
</evidence>
<evidence type="ECO:0000305" key="2"/>
<keyword id="KW-0687">Ribonucleoprotein</keyword>
<keyword id="KW-0689">Ribosomal protein</keyword>
<proteinExistence type="inferred from homology"/>
<reference key="1">
    <citation type="submission" date="2008-02" db="EMBL/GenBank/DDBJ databases">
        <title>Complete sequence of Yersinia pseudotuberculosis YPIII.</title>
        <authorList>
            <consortium name="US DOE Joint Genome Institute"/>
            <person name="Copeland A."/>
            <person name="Lucas S."/>
            <person name="Lapidus A."/>
            <person name="Glavina del Rio T."/>
            <person name="Dalin E."/>
            <person name="Tice H."/>
            <person name="Bruce D."/>
            <person name="Goodwin L."/>
            <person name="Pitluck S."/>
            <person name="Munk A.C."/>
            <person name="Brettin T."/>
            <person name="Detter J.C."/>
            <person name="Han C."/>
            <person name="Tapia R."/>
            <person name="Schmutz J."/>
            <person name="Larimer F."/>
            <person name="Land M."/>
            <person name="Hauser L."/>
            <person name="Challacombe J.F."/>
            <person name="Green L."/>
            <person name="Lindler L.E."/>
            <person name="Nikolich M.P."/>
            <person name="Richardson P."/>
        </authorList>
    </citation>
    <scope>NUCLEOTIDE SEQUENCE [LARGE SCALE GENOMIC DNA]</scope>
    <source>
        <strain>YPIII</strain>
    </source>
</reference>
<dbReference type="EMBL" id="CP000950">
    <property type="protein sequence ID" value="ACA66617.1"/>
    <property type="molecule type" value="Genomic_DNA"/>
</dbReference>
<dbReference type="SMR" id="B1JIY2"/>
<dbReference type="KEGG" id="ypy:YPK_0304"/>
<dbReference type="PATRIC" id="fig|502800.11.peg.911"/>
<dbReference type="GO" id="GO:0005737">
    <property type="term" value="C:cytoplasm"/>
    <property type="evidence" value="ECO:0007669"/>
    <property type="project" value="UniProtKB-ARBA"/>
</dbReference>
<dbReference type="GO" id="GO:1990904">
    <property type="term" value="C:ribonucleoprotein complex"/>
    <property type="evidence" value="ECO:0007669"/>
    <property type="project" value="UniProtKB-KW"/>
</dbReference>
<dbReference type="GO" id="GO:0005840">
    <property type="term" value="C:ribosome"/>
    <property type="evidence" value="ECO:0007669"/>
    <property type="project" value="UniProtKB-KW"/>
</dbReference>
<dbReference type="GO" id="GO:0003735">
    <property type="term" value="F:structural constituent of ribosome"/>
    <property type="evidence" value="ECO:0007669"/>
    <property type="project" value="InterPro"/>
</dbReference>
<dbReference type="GO" id="GO:0006412">
    <property type="term" value="P:translation"/>
    <property type="evidence" value="ECO:0007669"/>
    <property type="project" value="UniProtKB-UniRule"/>
</dbReference>
<dbReference type="HAMAP" id="MF_00251">
    <property type="entry name" value="Ribosomal_bL36"/>
    <property type="match status" value="1"/>
</dbReference>
<dbReference type="InterPro" id="IPR000473">
    <property type="entry name" value="Ribosomal_bL36"/>
</dbReference>
<dbReference type="InterPro" id="IPR035977">
    <property type="entry name" value="Ribosomal_bL36_sp"/>
</dbReference>
<dbReference type="NCBIfam" id="TIGR01022">
    <property type="entry name" value="rpmJ_bact"/>
    <property type="match status" value="1"/>
</dbReference>
<dbReference type="PANTHER" id="PTHR42888">
    <property type="entry name" value="50S RIBOSOMAL PROTEIN L36, CHLOROPLASTIC"/>
    <property type="match status" value="1"/>
</dbReference>
<dbReference type="PANTHER" id="PTHR42888:SF1">
    <property type="entry name" value="LARGE RIBOSOMAL SUBUNIT PROTEIN BL36C"/>
    <property type="match status" value="1"/>
</dbReference>
<dbReference type="Pfam" id="PF00444">
    <property type="entry name" value="Ribosomal_L36"/>
    <property type="match status" value="1"/>
</dbReference>
<dbReference type="SUPFAM" id="SSF57840">
    <property type="entry name" value="Ribosomal protein L36"/>
    <property type="match status" value="1"/>
</dbReference>
<dbReference type="PROSITE" id="PS00828">
    <property type="entry name" value="RIBOSOMAL_L36"/>
    <property type="match status" value="1"/>
</dbReference>
<sequence>MKVRASVKKLCRNCKIVKRNGVVRVICSAEPKHKQRQG</sequence>
<comment type="similarity">
    <text evidence="1">Belongs to the bacterial ribosomal protein bL36 family.</text>
</comment>